<comment type="function">
    <text evidence="1">Part of a membrane-bound complex that couples electron transfer with translocation of ions across the membrane.</text>
</comment>
<comment type="subunit">
    <text evidence="1">The complex is composed of six subunits: RnfA, RnfB, RnfC, RnfD, RnfE and RnfG.</text>
</comment>
<comment type="subcellular location">
    <subcellularLocation>
        <location evidence="1">Cell inner membrane</location>
        <topology evidence="1">Multi-pass membrane protein</topology>
    </subcellularLocation>
</comment>
<comment type="similarity">
    <text evidence="1">Belongs to the NqrDE/RnfAE family.</text>
</comment>
<reference key="1">
    <citation type="journal article" date="2000" name="Nature">
        <title>Complete genome sequence of Pseudomonas aeruginosa PAO1, an opportunistic pathogen.</title>
        <authorList>
            <person name="Stover C.K."/>
            <person name="Pham X.-Q.T."/>
            <person name="Erwin A.L."/>
            <person name="Mizoguchi S.D."/>
            <person name="Warrener P."/>
            <person name="Hickey M.J."/>
            <person name="Brinkman F.S.L."/>
            <person name="Hufnagle W.O."/>
            <person name="Kowalik D.J."/>
            <person name="Lagrou M."/>
            <person name="Garber R.L."/>
            <person name="Goltry L."/>
            <person name="Tolentino E."/>
            <person name="Westbrock-Wadman S."/>
            <person name="Yuan Y."/>
            <person name="Brody L.L."/>
            <person name="Coulter S.N."/>
            <person name="Folger K.R."/>
            <person name="Kas A."/>
            <person name="Larbig K."/>
            <person name="Lim R.M."/>
            <person name="Smith K.A."/>
            <person name="Spencer D.H."/>
            <person name="Wong G.K.-S."/>
            <person name="Wu Z."/>
            <person name="Paulsen I.T."/>
            <person name="Reizer J."/>
            <person name="Saier M.H. Jr."/>
            <person name="Hancock R.E.W."/>
            <person name="Lory S."/>
            <person name="Olson M.V."/>
        </authorList>
    </citation>
    <scope>NUCLEOTIDE SEQUENCE [LARGE SCALE GENOMIC DNA]</scope>
    <source>
        <strain>ATCC 15692 / DSM 22644 / CIP 104116 / JCM 14847 / LMG 12228 / 1C / PRS 101 / PAO1</strain>
    </source>
</reference>
<protein>
    <recommendedName>
        <fullName evidence="1">Ion-translocating oxidoreductase complex subunit A</fullName>
        <ecNumber evidence="1">7.-.-.-</ecNumber>
    </recommendedName>
    <alternativeName>
        <fullName evidence="1">Rnf electron transport complex subunit A</fullName>
    </alternativeName>
</protein>
<dbReference type="EC" id="7.-.-.-" evidence="1"/>
<dbReference type="EMBL" id="AE004091">
    <property type="protein sequence ID" value="AAG06877.1"/>
    <property type="molecule type" value="Genomic_DNA"/>
</dbReference>
<dbReference type="PIR" id="B83208">
    <property type="entry name" value="B83208"/>
</dbReference>
<dbReference type="RefSeq" id="NP_252179.1">
    <property type="nucleotide sequence ID" value="NC_002516.2"/>
</dbReference>
<dbReference type="SMR" id="Q9HYC0"/>
<dbReference type="FunCoup" id="Q9HYC0">
    <property type="interactions" value="77"/>
</dbReference>
<dbReference type="STRING" id="208964.PA3489"/>
<dbReference type="PaxDb" id="208964-PA3489"/>
<dbReference type="DNASU" id="879985"/>
<dbReference type="GeneID" id="879985"/>
<dbReference type="KEGG" id="pae:PA3489"/>
<dbReference type="PATRIC" id="fig|208964.12.peg.3653"/>
<dbReference type="PseudoCAP" id="PA3489"/>
<dbReference type="HOGENOM" id="CLU_095255_1_0_6"/>
<dbReference type="InParanoid" id="Q9HYC0"/>
<dbReference type="OrthoDB" id="9803631at2"/>
<dbReference type="PhylomeDB" id="Q9HYC0"/>
<dbReference type="BioCyc" id="PAER208964:G1FZ6-3557-MONOMER"/>
<dbReference type="Proteomes" id="UP000002438">
    <property type="component" value="Chromosome"/>
</dbReference>
<dbReference type="GO" id="GO:0005886">
    <property type="term" value="C:plasma membrane"/>
    <property type="evidence" value="ECO:0000318"/>
    <property type="project" value="GO_Central"/>
</dbReference>
<dbReference type="GO" id="GO:0022900">
    <property type="term" value="P:electron transport chain"/>
    <property type="evidence" value="ECO:0007669"/>
    <property type="project" value="UniProtKB-UniRule"/>
</dbReference>
<dbReference type="HAMAP" id="MF_00459">
    <property type="entry name" value="RsxA_RnfA"/>
    <property type="match status" value="1"/>
</dbReference>
<dbReference type="InterPro" id="IPR011293">
    <property type="entry name" value="Ion_transpt_RnfA/RsxA"/>
</dbReference>
<dbReference type="InterPro" id="IPR003667">
    <property type="entry name" value="NqrDE/RnfAE"/>
</dbReference>
<dbReference type="InterPro" id="IPR050133">
    <property type="entry name" value="NqrDE/RnfAE_oxidrdctase"/>
</dbReference>
<dbReference type="NCBIfam" id="NF003481">
    <property type="entry name" value="PRK05151.1"/>
    <property type="match status" value="1"/>
</dbReference>
<dbReference type="NCBIfam" id="TIGR01943">
    <property type="entry name" value="rnfA"/>
    <property type="match status" value="1"/>
</dbReference>
<dbReference type="PANTHER" id="PTHR30335">
    <property type="entry name" value="INTEGRAL MEMBRANE PROTEIN OF SOXR-REDUCING COMPLEX"/>
    <property type="match status" value="1"/>
</dbReference>
<dbReference type="PANTHER" id="PTHR30335:SF0">
    <property type="entry name" value="ION-TRANSLOCATING OXIDOREDUCTASE COMPLEX SUBUNIT A"/>
    <property type="match status" value="1"/>
</dbReference>
<dbReference type="Pfam" id="PF02508">
    <property type="entry name" value="Rnf-Nqr"/>
    <property type="match status" value="1"/>
</dbReference>
<dbReference type="PIRSF" id="PIRSF006102">
    <property type="entry name" value="NQR_DE"/>
    <property type="match status" value="1"/>
</dbReference>
<organism>
    <name type="scientific">Pseudomonas aeruginosa (strain ATCC 15692 / DSM 22644 / CIP 104116 / JCM 14847 / LMG 12228 / 1C / PRS 101 / PAO1)</name>
    <dbReference type="NCBI Taxonomy" id="208964"/>
    <lineage>
        <taxon>Bacteria</taxon>
        <taxon>Pseudomonadati</taxon>
        <taxon>Pseudomonadota</taxon>
        <taxon>Gammaproteobacteria</taxon>
        <taxon>Pseudomonadales</taxon>
        <taxon>Pseudomonadaceae</taxon>
        <taxon>Pseudomonas</taxon>
    </lineage>
</organism>
<proteinExistence type="inferred from homology"/>
<evidence type="ECO:0000255" key="1">
    <source>
        <dbReference type="HAMAP-Rule" id="MF_00459"/>
    </source>
</evidence>
<gene>
    <name evidence="1" type="primary">rnfA</name>
    <name type="ordered locus">PA3489</name>
</gene>
<name>RNFA_PSEAE</name>
<keyword id="KW-0997">Cell inner membrane</keyword>
<keyword id="KW-1003">Cell membrane</keyword>
<keyword id="KW-0249">Electron transport</keyword>
<keyword id="KW-0472">Membrane</keyword>
<keyword id="KW-1185">Reference proteome</keyword>
<keyword id="KW-1278">Translocase</keyword>
<keyword id="KW-0812">Transmembrane</keyword>
<keyword id="KW-1133">Transmembrane helix</keyword>
<keyword id="KW-0813">Transport</keyword>
<accession>Q9HYC0</accession>
<sequence>MTELALILVSAILVNNFVLVQFLGLCPFMGVSRKIETAIGLSLATTFVLTLAAMCSHILQRYVLRPLDLEYLRTIGFILVIAVVVQFTEMLVKKTSPLLYRVLGIFLPLITTNCIVLGVALLNANKAEYGFLQATTQGFGAGLGFSLVLVLFAALRERIAIADVPAPFRGAAIGMITAGLMSLAFMGFSGLVRP</sequence>
<feature type="chain" id="PRO_0000214295" description="Ion-translocating oxidoreductase complex subunit A">
    <location>
        <begin position="1"/>
        <end position="194"/>
    </location>
</feature>
<feature type="transmembrane region" description="Helical" evidence="1">
    <location>
        <begin position="4"/>
        <end position="24"/>
    </location>
</feature>
<feature type="transmembrane region" description="Helical" evidence="1">
    <location>
        <begin position="39"/>
        <end position="59"/>
    </location>
</feature>
<feature type="transmembrane region" description="Helical" evidence="1">
    <location>
        <begin position="72"/>
        <end position="92"/>
    </location>
</feature>
<feature type="transmembrane region" description="Helical" evidence="1">
    <location>
        <begin position="102"/>
        <end position="122"/>
    </location>
</feature>
<feature type="transmembrane region" description="Helical" evidence="1">
    <location>
        <begin position="135"/>
        <end position="155"/>
    </location>
</feature>
<feature type="transmembrane region" description="Helical" evidence="1">
    <location>
        <begin position="172"/>
        <end position="192"/>
    </location>
</feature>